<sequence length="242" mass="26691">MKLFVYHTPEATPTDQLPDCAVVIDVLRATTTIATALHAGAEAVQTFADLDELFQFSETWQQTPFLRAGERGGQQVEGCELGNSPRSCTPEMVAGKRLFLTTTNGTRALKRVEQAPTVITAAQVNRQSVVKFLQTEQPDTVWFVGSGWQGDYSLEDTVCAGAIAKSLWNGDSDQLGNDEVIGAISLYQQWQQDLFGLFKLASHGQRLLRLDNEIDIRYCAQSDTLAVLPIQTEPGVLKAYRH</sequence>
<feature type="chain" id="PRO_1000126230" description="Probable 2-phosphosulfolactate phosphatase">
    <location>
        <begin position="1"/>
        <end position="242"/>
    </location>
</feature>
<organism>
    <name type="scientific">Picosynechococcus sp. (strain ATCC 27264 / PCC 7002 / PR-6)</name>
    <name type="common">Agmenellum quadruplicatum</name>
    <dbReference type="NCBI Taxonomy" id="32049"/>
    <lineage>
        <taxon>Bacteria</taxon>
        <taxon>Bacillati</taxon>
        <taxon>Cyanobacteriota</taxon>
        <taxon>Cyanophyceae</taxon>
        <taxon>Oscillatoriophycideae</taxon>
        <taxon>Chroococcales</taxon>
        <taxon>Geminocystaceae</taxon>
        <taxon>Picosynechococcus</taxon>
    </lineage>
</organism>
<dbReference type="EC" id="3.1.3.71" evidence="1"/>
<dbReference type="EMBL" id="CP000951">
    <property type="protein sequence ID" value="ACA99823.1"/>
    <property type="molecule type" value="Genomic_DNA"/>
</dbReference>
<dbReference type="RefSeq" id="WP_012307446.1">
    <property type="nucleotide sequence ID" value="NZ_JAHHPU010000002.1"/>
</dbReference>
<dbReference type="SMR" id="B1XQ41"/>
<dbReference type="KEGG" id="syp:SYNPCC7002_A1835"/>
<dbReference type="eggNOG" id="COG2045">
    <property type="taxonomic scope" value="Bacteria"/>
</dbReference>
<dbReference type="HOGENOM" id="CLU_070028_0_1_3"/>
<dbReference type="Proteomes" id="UP000001688">
    <property type="component" value="Chromosome"/>
</dbReference>
<dbReference type="GO" id="GO:0050532">
    <property type="term" value="F:2-phosphosulfolactate phosphatase activity"/>
    <property type="evidence" value="ECO:0007669"/>
    <property type="project" value="UniProtKB-UniRule"/>
</dbReference>
<dbReference type="GO" id="GO:0000287">
    <property type="term" value="F:magnesium ion binding"/>
    <property type="evidence" value="ECO:0007669"/>
    <property type="project" value="UniProtKB-UniRule"/>
</dbReference>
<dbReference type="GO" id="GO:0050545">
    <property type="term" value="F:sulfopyruvate decarboxylase activity"/>
    <property type="evidence" value="ECO:0007669"/>
    <property type="project" value="TreeGrafter"/>
</dbReference>
<dbReference type="FunFam" id="3.90.1560.10:FF:000001">
    <property type="entry name" value="Probable 2-phosphosulfolactate phosphatase"/>
    <property type="match status" value="1"/>
</dbReference>
<dbReference type="Gene3D" id="3.90.1560.10">
    <property type="entry name" value="ComB-like"/>
    <property type="match status" value="1"/>
</dbReference>
<dbReference type="HAMAP" id="MF_00490">
    <property type="entry name" value="ComB"/>
    <property type="match status" value="1"/>
</dbReference>
<dbReference type="InterPro" id="IPR005238">
    <property type="entry name" value="ComB-like"/>
</dbReference>
<dbReference type="InterPro" id="IPR036702">
    <property type="entry name" value="ComB-like_sf"/>
</dbReference>
<dbReference type="NCBIfam" id="NF002056">
    <property type="entry name" value="PRK00886.1-5"/>
    <property type="match status" value="1"/>
</dbReference>
<dbReference type="PANTHER" id="PTHR37311">
    <property type="entry name" value="2-PHOSPHOSULFOLACTATE PHOSPHATASE-RELATED"/>
    <property type="match status" value="1"/>
</dbReference>
<dbReference type="PANTHER" id="PTHR37311:SF1">
    <property type="entry name" value="2-PHOSPHOSULFOLACTATE PHOSPHATASE-RELATED"/>
    <property type="match status" value="1"/>
</dbReference>
<dbReference type="Pfam" id="PF04029">
    <property type="entry name" value="2-ph_phosp"/>
    <property type="match status" value="1"/>
</dbReference>
<dbReference type="SUPFAM" id="SSF142823">
    <property type="entry name" value="ComB-like"/>
    <property type="match status" value="1"/>
</dbReference>
<proteinExistence type="inferred from homology"/>
<comment type="catalytic activity">
    <reaction evidence="1">
        <text>(2R)-O-phospho-3-sulfolactate + H2O = (2R)-3-sulfolactate + phosphate</text>
        <dbReference type="Rhea" id="RHEA:23416"/>
        <dbReference type="ChEBI" id="CHEBI:15377"/>
        <dbReference type="ChEBI" id="CHEBI:15597"/>
        <dbReference type="ChEBI" id="CHEBI:43474"/>
        <dbReference type="ChEBI" id="CHEBI:58738"/>
        <dbReference type="EC" id="3.1.3.71"/>
    </reaction>
</comment>
<comment type="cofactor">
    <cofactor evidence="1">
        <name>Mg(2+)</name>
        <dbReference type="ChEBI" id="CHEBI:18420"/>
    </cofactor>
</comment>
<comment type="similarity">
    <text evidence="1">Belongs to the ComB family.</text>
</comment>
<keyword id="KW-0378">Hydrolase</keyword>
<keyword id="KW-0460">Magnesium</keyword>
<keyword id="KW-1185">Reference proteome</keyword>
<accession>B1XQ41</accession>
<reference key="1">
    <citation type="submission" date="2008-02" db="EMBL/GenBank/DDBJ databases">
        <title>Complete sequence of Synechococcus sp. PCC 7002.</title>
        <authorList>
            <person name="Li T."/>
            <person name="Zhao J."/>
            <person name="Zhao C."/>
            <person name="Liu Z."/>
            <person name="Zhao F."/>
            <person name="Marquardt J."/>
            <person name="Nomura C.T."/>
            <person name="Persson S."/>
            <person name="Detter J.C."/>
            <person name="Richardson P.M."/>
            <person name="Lanz C."/>
            <person name="Schuster S.C."/>
            <person name="Wang J."/>
            <person name="Li S."/>
            <person name="Huang X."/>
            <person name="Cai T."/>
            <person name="Yu Z."/>
            <person name="Luo J."/>
            <person name="Zhao J."/>
            <person name="Bryant D.A."/>
        </authorList>
    </citation>
    <scope>NUCLEOTIDE SEQUENCE [LARGE SCALE GENOMIC DNA]</scope>
    <source>
        <strain>ATCC 27264 / PCC 7002 / PR-6</strain>
    </source>
</reference>
<gene>
    <name evidence="1" type="primary">comB</name>
    <name type="ordered locus">SYNPCC7002_A1835</name>
</gene>
<name>COMB_PICP2</name>
<protein>
    <recommendedName>
        <fullName evidence="1">Probable 2-phosphosulfolactate phosphatase</fullName>
        <ecNumber evidence="1">3.1.3.71</ecNumber>
    </recommendedName>
</protein>
<evidence type="ECO:0000255" key="1">
    <source>
        <dbReference type="HAMAP-Rule" id="MF_00490"/>
    </source>
</evidence>